<protein>
    <recommendedName>
        <fullName evidence="1">UPF0397 protein VF_1566</fullName>
    </recommendedName>
</protein>
<sequence>MNLSAKTVVVIAIGAALYGIGGLPMFGIPVFANTTLKPAMAVLALFSVLYGPIVGFLVGFIGHWVTDLFAGWGVWLTWVLGSGIVGMIIGLFPIITKNRIESGLFDKKDFLIFVVLAFFGNVFGYGTSAFLDTILYAEPFTKVFMQLCIIAAGNTFLIAIVGYFILNNLAKRKKQSTNLTEAP</sequence>
<gene>
    <name type="ordered locus">VF_1566</name>
</gene>
<organism>
    <name type="scientific">Aliivibrio fischeri (strain ATCC 700601 / ES114)</name>
    <name type="common">Vibrio fischeri</name>
    <dbReference type="NCBI Taxonomy" id="312309"/>
    <lineage>
        <taxon>Bacteria</taxon>
        <taxon>Pseudomonadati</taxon>
        <taxon>Pseudomonadota</taxon>
        <taxon>Gammaproteobacteria</taxon>
        <taxon>Vibrionales</taxon>
        <taxon>Vibrionaceae</taxon>
        <taxon>Aliivibrio</taxon>
    </lineage>
</organism>
<dbReference type="EMBL" id="CP000020">
    <property type="protein sequence ID" value="AAW86061.1"/>
    <property type="molecule type" value="Genomic_DNA"/>
</dbReference>
<dbReference type="RefSeq" id="WP_005419808.1">
    <property type="nucleotide sequence ID" value="NZ_CAWLES010000001.1"/>
</dbReference>
<dbReference type="RefSeq" id="YP_204949.1">
    <property type="nucleotide sequence ID" value="NC_006840.2"/>
</dbReference>
<dbReference type="SMR" id="Q5E4I5"/>
<dbReference type="STRING" id="312309.VF_1566"/>
<dbReference type="EnsemblBacteria" id="AAW86061">
    <property type="protein sequence ID" value="AAW86061"/>
    <property type="gene ID" value="VF_1566"/>
</dbReference>
<dbReference type="GeneID" id="54164240"/>
<dbReference type="KEGG" id="vfi:VF_1566"/>
<dbReference type="PATRIC" id="fig|312309.11.peg.1584"/>
<dbReference type="eggNOG" id="COG4720">
    <property type="taxonomic scope" value="Bacteria"/>
</dbReference>
<dbReference type="HOGENOM" id="CLU_120023_0_0_6"/>
<dbReference type="OrthoDB" id="4550662at2"/>
<dbReference type="Proteomes" id="UP000000537">
    <property type="component" value="Chromosome I"/>
</dbReference>
<dbReference type="GO" id="GO:0005886">
    <property type="term" value="C:plasma membrane"/>
    <property type="evidence" value="ECO:0007669"/>
    <property type="project" value="UniProtKB-SubCell"/>
</dbReference>
<dbReference type="Gene3D" id="1.10.1760.20">
    <property type="match status" value="1"/>
</dbReference>
<dbReference type="HAMAP" id="MF_01572">
    <property type="entry name" value="UPF0397"/>
    <property type="match status" value="1"/>
</dbReference>
<dbReference type="InterPro" id="IPR009825">
    <property type="entry name" value="ECF_substrate-spec-like"/>
</dbReference>
<dbReference type="InterPro" id="IPR022914">
    <property type="entry name" value="UPF0397"/>
</dbReference>
<dbReference type="NCBIfam" id="NF010182">
    <property type="entry name" value="PRK13661.1"/>
    <property type="match status" value="1"/>
</dbReference>
<dbReference type="PANTHER" id="PTHR37815">
    <property type="entry name" value="UPF0397 PROTEIN BC_2624-RELATED"/>
    <property type="match status" value="1"/>
</dbReference>
<dbReference type="PANTHER" id="PTHR37815:SF3">
    <property type="entry name" value="UPF0397 PROTEIN SPR0429"/>
    <property type="match status" value="1"/>
</dbReference>
<dbReference type="Pfam" id="PF07155">
    <property type="entry name" value="ECF-ribofla_trS"/>
    <property type="match status" value="1"/>
</dbReference>
<comment type="subcellular location">
    <subcellularLocation>
        <location evidence="1">Cell membrane</location>
        <topology evidence="1">Multi-pass membrane protein</topology>
    </subcellularLocation>
</comment>
<comment type="similarity">
    <text evidence="1">Belongs to the UPF0397 family.</text>
</comment>
<name>Y1566_ALIF1</name>
<proteinExistence type="inferred from homology"/>
<accession>Q5E4I5</accession>
<reference key="1">
    <citation type="journal article" date="2005" name="Proc. Natl. Acad. Sci. U.S.A.">
        <title>Complete genome sequence of Vibrio fischeri: a symbiotic bacterium with pathogenic congeners.</title>
        <authorList>
            <person name="Ruby E.G."/>
            <person name="Urbanowski M."/>
            <person name="Campbell J."/>
            <person name="Dunn A."/>
            <person name="Faini M."/>
            <person name="Gunsalus R."/>
            <person name="Lostroh P."/>
            <person name="Lupp C."/>
            <person name="McCann J."/>
            <person name="Millikan D."/>
            <person name="Schaefer A."/>
            <person name="Stabb E."/>
            <person name="Stevens A."/>
            <person name="Visick K."/>
            <person name="Whistler C."/>
            <person name="Greenberg E.P."/>
        </authorList>
    </citation>
    <scope>NUCLEOTIDE SEQUENCE [LARGE SCALE GENOMIC DNA]</scope>
    <source>
        <strain>ATCC 700601 / ES114</strain>
    </source>
</reference>
<feature type="chain" id="PRO_0000260818" description="UPF0397 protein VF_1566">
    <location>
        <begin position="1"/>
        <end position="183"/>
    </location>
</feature>
<feature type="transmembrane region" description="Helical" evidence="1">
    <location>
        <begin position="8"/>
        <end position="28"/>
    </location>
</feature>
<feature type="transmembrane region" description="Helical" evidence="1">
    <location>
        <begin position="41"/>
        <end position="61"/>
    </location>
</feature>
<feature type="transmembrane region" description="Helical" evidence="1">
    <location>
        <begin position="75"/>
        <end position="95"/>
    </location>
</feature>
<feature type="transmembrane region" description="Helical" evidence="1">
    <location>
        <begin position="110"/>
        <end position="130"/>
    </location>
</feature>
<feature type="transmembrane region" description="Helical" evidence="1">
    <location>
        <begin position="147"/>
        <end position="167"/>
    </location>
</feature>
<evidence type="ECO:0000255" key="1">
    <source>
        <dbReference type="HAMAP-Rule" id="MF_01572"/>
    </source>
</evidence>
<keyword id="KW-1003">Cell membrane</keyword>
<keyword id="KW-0472">Membrane</keyword>
<keyword id="KW-1185">Reference proteome</keyword>
<keyword id="KW-0812">Transmembrane</keyword>
<keyword id="KW-1133">Transmembrane helix</keyword>